<reference key="1">
    <citation type="journal article" date="1999" name="Am. J. Hum. Genet.">
        <title>Human molybdopterin synthase gene: identification of a bicistronic transcript with overlapping reading frames.</title>
        <authorList>
            <person name="Stallmeyer B."/>
            <person name="Drugeon G."/>
            <person name="Reiss J."/>
            <person name="Haenni A.L."/>
            <person name="Mendel R.R."/>
        </authorList>
    </citation>
    <scope>NUCLEOTIDE SEQUENCE [MRNA]</scope>
</reference>
<reference key="2">
    <citation type="journal article" date="2010" name="Cell">
        <title>A tissue-specific atlas of mouse protein phosphorylation and expression.</title>
        <authorList>
            <person name="Huttlin E.L."/>
            <person name="Jedrychowski M.P."/>
            <person name="Elias J.E."/>
            <person name="Goswami T."/>
            <person name="Rad R."/>
            <person name="Beausoleil S.A."/>
            <person name="Villen J."/>
            <person name="Haas W."/>
            <person name="Sowa M.E."/>
            <person name="Gygi S.P."/>
        </authorList>
    </citation>
    <scope>IDENTIFICATION BY MASS SPECTROMETRY [LARGE SCALE ANALYSIS]</scope>
    <source>
        <tissue>Brain</tissue>
        <tissue>Liver</tissue>
        <tissue>Testis</tissue>
    </source>
</reference>
<name>MOC2A_MOUSE</name>
<protein>
    <recommendedName>
        <fullName evidence="1">Molybdopterin synthase sulfur carrier subunit</fullName>
    </recommendedName>
    <alternativeName>
        <fullName evidence="1">Molybdenum cofactor synthesis protein 2 small subunit</fullName>
    </alternativeName>
    <alternativeName>
        <fullName evidence="1">Molybdenum cofactor synthesis protein 2A</fullName>
        <shortName evidence="1">MOCS2A</shortName>
    </alternativeName>
    <alternativeName>
        <fullName evidence="1">Sulfur carrier protein MOCS2A</fullName>
    </alternativeName>
</protein>
<proteinExistence type="evidence at protein level"/>
<sequence>MVPRCQIDVLYFAKSAEIAGVRSETISVPQEIKASELWKELEMLHPGLADVRNQVIFAVRQEYVELGDQQLLLQPGDEVAIIPPISGG</sequence>
<gene>
    <name evidence="1" type="primary">Mocs2</name>
</gene>
<evidence type="ECO:0000255" key="1">
    <source>
        <dbReference type="HAMAP-Rule" id="MF_03051"/>
    </source>
</evidence>
<feature type="chain" id="PRO_0000209135" description="Molybdopterin synthase sulfur carrier subunit">
    <location>
        <begin position="1"/>
        <end position="88"/>
    </location>
</feature>
<feature type="modified residue" description="1-thioglycine; alternate" evidence="1">
    <location>
        <position position="88"/>
    </location>
</feature>
<feature type="modified residue" description="Glycyl adenylate; alternate" evidence="1">
    <location>
        <position position="88"/>
    </location>
</feature>
<keyword id="KW-0963">Cytoplasm</keyword>
<keyword id="KW-0501">Molybdenum cofactor biosynthesis</keyword>
<keyword id="KW-0547">Nucleotide-binding</keyword>
<keyword id="KW-0597">Phosphoprotein</keyword>
<keyword id="KW-1185">Reference proteome</keyword>
<comment type="function">
    <text evidence="1">Acts as a sulfur carrier required for molybdopterin biosynthesis. Component of the molybdopterin synthase complex that catalyzes the conversion of precursor Z into molybdopterin by mediating the incorporation of 2 sulfur atoms into precursor Z to generate a dithiolene group. In the complex, serves as sulfur donor by being thiocarboxylated (-COSH) at its C-terminus by MOCS3. After interaction with MOCS2B, the sulfur is then transferred to precursor Z to form molybdopterin.</text>
</comment>
<comment type="pathway">
    <text evidence="1">Cofactor biosynthesis; molybdopterin biosynthesis.</text>
</comment>
<comment type="subunit">
    <text evidence="1">Heterotetramer; composed of 2 small (MOCS2A) and 2 large (MOCS2B) subunits.</text>
</comment>
<comment type="subcellular location">
    <subcellularLocation>
        <location evidence="1">Cytoplasm</location>
        <location evidence="1">Cytosol</location>
    </subcellularLocation>
</comment>
<comment type="PTM">
    <text evidence="1">C-terminal thiocarboxylation occurs in 2 steps, it is first acyl-adenylated (-COAMP) via the hesA/moeB/thiF part of MOCS3, then thiocarboxylated (-COSH) via the rhodanese domain of MOCS3.</text>
</comment>
<comment type="miscellaneous">
    <text>This protein is produced by a bicistronic gene which also produces the large subunit (MOCS2B) from an overlapping reading frame.</text>
</comment>
<comment type="similarity">
    <text evidence="1">Belongs to the MoaD family. MOCS2A subfamily.</text>
</comment>
<accession>Q9Z224</accession>
<accession>Q9D6Q0</accession>
<dbReference type="EMBL" id="AF091872">
    <property type="protein sequence ID" value="AAD14600.1"/>
    <property type="molecule type" value="mRNA"/>
</dbReference>
<dbReference type="CCDS" id="CCDS49369.1"/>
<dbReference type="SMR" id="Q9Z224"/>
<dbReference type="ProteomicsDB" id="291378"/>
<dbReference type="Pumba" id="Q9Z224"/>
<dbReference type="AGR" id="MGI:1336894"/>
<dbReference type="MGI" id="MGI:1336894">
    <property type="gene designation" value="Mocs2"/>
</dbReference>
<dbReference type="UniPathway" id="UPA00344"/>
<dbReference type="ChiTaRS" id="Mocs2">
    <property type="organism name" value="mouse"/>
</dbReference>
<dbReference type="Proteomes" id="UP000000589">
    <property type="component" value="Unplaced"/>
</dbReference>
<dbReference type="GO" id="GO:0005829">
    <property type="term" value="C:cytosol"/>
    <property type="evidence" value="ECO:0000250"/>
    <property type="project" value="UniProtKB"/>
</dbReference>
<dbReference type="GO" id="GO:1990140">
    <property type="term" value="C:molybdopterin synthase complex"/>
    <property type="evidence" value="ECO:0000250"/>
    <property type="project" value="UniProtKB"/>
</dbReference>
<dbReference type="GO" id="GO:0042802">
    <property type="term" value="F:identical protein binding"/>
    <property type="evidence" value="ECO:0000353"/>
    <property type="project" value="MGI"/>
</dbReference>
<dbReference type="GO" id="GO:0030366">
    <property type="term" value="F:molybdopterin synthase activity"/>
    <property type="evidence" value="ECO:0000266"/>
    <property type="project" value="MGI"/>
</dbReference>
<dbReference type="GO" id="GO:0000166">
    <property type="term" value="F:nucleotide binding"/>
    <property type="evidence" value="ECO:0007669"/>
    <property type="project" value="UniProtKB-KW"/>
</dbReference>
<dbReference type="GO" id="GO:0006777">
    <property type="term" value="P:Mo-molybdopterin cofactor biosynthetic process"/>
    <property type="evidence" value="ECO:0000250"/>
    <property type="project" value="UniProtKB"/>
</dbReference>
<dbReference type="GO" id="GO:0032324">
    <property type="term" value="P:molybdopterin cofactor biosynthetic process"/>
    <property type="evidence" value="ECO:0000315"/>
    <property type="project" value="MGI"/>
</dbReference>
<dbReference type="CDD" id="cd00754">
    <property type="entry name" value="Ubl_MoaD"/>
    <property type="match status" value="1"/>
</dbReference>
<dbReference type="FunFam" id="3.10.20.30:FF:000010">
    <property type="entry name" value="Molybdopterin synthase sulfur carrier subunit"/>
    <property type="match status" value="1"/>
</dbReference>
<dbReference type="Gene3D" id="3.10.20.30">
    <property type="match status" value="1"/>
</dbReference>
<dbReference type="HAMAP" id="MF_03051">
    <property type="entry name" value="MOCS2A"/>
    <property type="match status" value="1"/>
</dbReference>
<dbReference type="InterPro" id="IPR012675">
    <property type="entry name" value="Beta-grasp_dom_sf"/>
</dbReference>
<dbReference type="InterPro" id="IPR044672">
    <property type="entry name" value="MOCS2A"/>
</dbReference>
<dbReference type="InterPro" id="IPR028887">
    <property type="entry name" value="MOCS2A_euk"/>
</dbReference>
<dbReference type="InterPro" id="IPR016155">
    <property type="entry name" value="Mopterin_synth/thiamin_S_b"/>
</dbReference>
<dbReference type="InterPro" id="IPR003749">
    <property type="entry name" value="ThiS/MoaD-like"/>
</dbReference>
<dbReference type="NCBIfam" id="TIGR01682">
    <property type="entry name" value="moaD"/>
    <property type="match status" value="1"/>
</dbReference>
<dbReference type="PANTHER" id="PTHR33359">
    <property type="entry name" value="MOLYBDOPTERIN SYNTHASE SULFUR CARRIER SUBUNIT"/>
    <property type="match status" value="1"/>
</dbReference>
<dbReference type="PANTHER" id="PTHR33359:SF1">
    <property type="entry name" value="MOLYBDOPTERIN SYNTHASE SULFUR CARRIER SUBUNIT"/>
    <property type="match status" value="1"/>
</dbReference>
<dbReference type="Pfam" id="PF02597">
    <property type="entry name" value="ThiS"/>
    <property type="match status" value="1"/>
</dbReference>
<dbReference type="SUPFAM" id="SSF54285">
    <property type="entry name" value="MoaD/ThiS"/>
    <property type="match status" value="1"/>
</dbReference>
<organism>
    <name type="scientific">Mus musculus</name>
    <name type="common">Mouse</name>
    <dbReference type="NCBI Taxonomy" id="10090"/>
    <lineage>
        <taxon>Eukaryota</taxon>
        <taxon>Metazoa</taxon>
        <taxon>Chordata</taxon>
        <taxon>Craniata</taxon>
        <taxon>Vertebrata</taxon>
        <taxon>Euteleostomi</taxon>
        <taxon>Mammalia</taxon>
        <taxon>Eutheria</taxon>
        <taxon>Euarchontoglires</taxon>
        <taxon>Glires</taxon>
        <taxon>Rodentia</taxon>
        <taxon>Myomorpha</taxon>
        <taxon>Muroidea</taxon>
        <taxon>Muridae</taxon>
        <taxon>Murinae</taxon>
        <taxon>Mus</taxon>
        <taxon>Mus</taxon>
    </lineage>
</organism>